<keyword id="KW-0227">DNA damage</keyword>
<keyword id="KW-0234">DNA repair</keyword>
<keyword id="KW-0235">DNA replication</keyword>
<keyword id="KW-0436">Ligase</keyword>
<keyword id="KW-0460">Magnesium</keyword>
<keyword id="KW-0464">Manganese</keyword>
<keyword id="KW-0479">Metal-binding</keyword>
<keyword id="KW-0520">NAD</keyword>
<keyword id="KW-0862">Zinc</keyword>
<comment type="function">
    <text evidence="1">DNA ligase that catalyzes the formation of phosphodiester linkages between 5'-phosphoryl and 3'-hydroxyl groups in double-stranded DNA using NAD as a coenzyme and as the energy source for the reaction. It is essential for DNA replication and repair of damaged DNA.</text>
</comment>
<comment type="catalytic activity">
    <reaction evidence="1">
        <text>NAD(+) + (deoxyribonucleotide)n-3'-hydroxyl + 5'-phospho-(deoxyribonucleotide)m = (deoxyribonucleotide)n+m + AMP + beta-nicotinamide D-nucleotide.</text>
        <dbReference type="EC" id="6.5.1.2"/>
    </reaction>
</comment>
<comment type="cofactor">
    <cofactor evidence="1">
        <name>Mg(2+)</name>
        <dbReference type="ChEBI" id="CHEBI:18420"/>
    </cofactor>
    <cofactor evidence="1">
        <name>Mn(2+)</name>
        <dbReference type="ChEBI" id="CHEBI:29035"/>
    </cofactor>
</comment>
<comment type="similarity">
    <text evidence="1">Belongs to the NAD-dependent DNA ligase family. LigA subfamily.</text>
</comment>
<dbReference type="EC" id="6.5.1.2" evidence="1"/>
<dbReference type="EMBL" id="AM039952">
    <property type="protein sequence ID" value="CAJ23345.1"/>
    <property type="molecule type" value="Genomic_DNA"/>
</dbReference>
<dbReference type="RefSeq" id="WP_011347029.1">
    <property type="nucleotide sequence ID" value="NZ_CP017190.1"/>
</dbReference>
<dbReference type="SMR" id="Q3BV14"/>
<dbReference type="STRING" id="456327.BJD11_14240"/>
<dbReference type="KEGG" id="xcv:XCV1668"/>
<dbReference type="eggNOG" id="COG0272">
    <property type="taxonomic scope" value="Bacteria"/>
</dbReference>
<dbReference type="HOGENOM" id="CLU_007764_2_1_6"/>
<dbReference type="Proteomes" id="UP000007069">
    <property type="component" value="Chromosome"/>
</dbReference>
<dbReference type="GO" id="GO:0005829">
    <property type="term" value="C:cytosol"/>
    <property type="evidence" value="ECO:0007669"/>
    <property type="project" value="TreeGrafter"/>
</dbReference>
<dbReference type="GO" id="GO:0003911">
    <property type="term" value="F:DNA ligase (NAD+) activity"/>
    <property type="evidence" value="ECO:0007669"/>
    <property type="project" value="UniProtKB-UniRule"/>
</dbReference>
<dbReference type="GO" id="GO:0046872">
    <property type="term" value="F:metal ion binding"/>
    <property type="evidence" value="ECO:0007669"/>
    <property type="project" value="UniProtKB-KW"/>
</dbReference>
<dbReference type="GO" id="GO:0006281">
    <property type="term" value="P:DNA repair"/>
    <property type="evidence" value="ECO:0007669"/>
    <property type="project" value="UniProtKB-KW"/>
</dbReference>
<dbReference type="GO" id="GO:0006260">
    <property type="term" value="P:DNA replication"/>
    <property type="evidence" value="ECO:0007669"/>
    <property type="project" value="UniProtKB-KW"/>
</dbReference>
<dbReference type="CDD" id="cd17748">
    <property type="entry name" value="BRCT_DNA_ligase_like"/>
    <property type="match status" value="1"/>
</dbReference>
<dbReference type="CDD" id="cd00114">
    <property type="entry name" value="LIGANc"/>
    <property type="match status" value="1"/>
</dbReference>
<dbReference type="FunFam" id="1.10.150.20:FF:000006">
    <property type="entry name" value="DNA ligase"/>
    <property type="match status" value="1"/>
</dbReference>
<dbReference type="FunFam" id="1.10.150.20:FF:000007">
    <property type="entry name" value="DNA ligase"/>
    <property type="match status" value="1"/>
</dbReference>
<dbReference type="FunFam" id="1.10.287.610:FF:000002">
    <property type="entry name" value="DNA ligase"/>
    <property type="match status" value="1"/>
</dbReference>
<dbReference type="FunFam" id="2.40.50.140:FF:000012">
    <property type="entry name" value="DNA ligase"/>
    <property type="match status" value="1"/>
</dbReference>
<dbReference type="FunFam" id="3.30.470.30:FF:000001">
    <property type="entry name" value="DNA ligase"/>
    <property type="match status" value="1"/>
</dbReference>
<dbReference type="FunFam" id="3.40.50.10190:FF:000054">
    <property type="entry name" value="DNA ligase"/>
    <property type="match status" value="1"/>
</dbReference>
<dbReference type="Gene3D" id="6.20.10.30">
    <property type="match status" value="1"/>
</dbReference>
<dbReference type="Gene3D" id="1.10.150.20">
    <property type="entry name" value="5' to 3' exonuclease, C-terminal subdomain"/>
    <property type="match status" value="2"/>
</dbReference>
<dbReference type="Gene3D" id="3.40.50.10190">
    <property type="entry name" value="BRCT domain"/>
    <property type="match status" value="1"/>
</dbReference>
<dbReference type="Gene3D" id="3.30.470.30">
    <property type="entry name" value="DNA ligase/mRNA capping enzyme"/>
    <property type="match status" value="1"/>
</dbReference>
<dbReference type="Gene3D" id="1.10.287.610">
    <property type="entry name" value="Helix hairpin bin"/>
    <property type="match status" value="1"/>
</dbReference>
<dbReference type="Gene3D" id="2.40.50.140">
    <property type="entry name" value="Nucleic acid-binding proteins"/>
    <property type="match status" value="1"/>
</dbReference>
<dbReference type="HAMAP" id="MF_01588">
    <property type="entry name" value="DNA_ligase_A"/>
    <property type="match status" value="1"/>
</dbReference>
<dbReference type="InterPro" id="IPR001357">
    <property type="entry name" value="BRCT_dom"/>
</dbReference>
<dbReference type="InterPro" id="IPR036420">
    <property type="entry name" value="BRCT_dom_sf"/>
</dbReference>
<dbReference type="InterPro" id="IPR041663">
    <property type="entry name" value="DisA/LigA_HHH"/>
</dbReference>
<dbReference type="InterPro" id="IPR001679">
    <property type="entry name" value="DNA_ligase"/>
</dbReference>
<dbReference type="InterPro" id="IPR018239">
    <property type="entry name" value="DNA_ligase_AS"/>
</dbReference>
<dbReference type="InterPro" id="IPR013839">
    <property type="entry name" value="DNAligase_adenylation"/>
</dbReference>
<dbReference type="InterPro" id="IPR013840">
    <property type="entry name" value="DNAligase_N"/>
</dbReference>
<dbReference type="InterPro" id="IPR012340">
    <property type="entry name" value="NA-bd_OB-fold"/>
</dbReference>
<dbReference type="InterPro" id="IPR004150">
    <property type="entry name" value="NAD_DNA_ligase_OB"/>
</dbReference>
<dbReference type="InterPro" id="IPR010994">
    <property type="entry name" value="RuvA_2-like"/>
</dbReference>
<dbReference type="InterPro" id="IPR004149">
    <property type="entry name" value="Znf_DNAligase_C4"/>
</dbReference>
<dbReference type="NCBIfam" id="TIGR00575">
    <property type="entry name" value="dnlj"/>
    <property type="match status" value="1"/>
</dbReference>
<dbReference type="NCBIfam" id="NF005932">
    <property type="entry name" value="PRK07956.1"/>
    <property type="match status" value="1"/>
</dbReference>
<dbReference type="PANTHER" id="PTHR23389">
    <property type="entry name" value="CHROMOSOME TRANSMISSION FIDELITY FACTOR 18"/>
    <property type="match status" value="1"/>
</dbReference>
<dbReference type="PANTHER" id="PTHR23389:SF9">
    <property type="entry name" value="DNA LIGASE"/>
    <property type="match status" value="1"/>
</dbReference>
<dbReference type="Pfam" id="PF00533">
    <property type="entry name" value="BRCT"/>
    <property type="match status" value="1"/>
</dbReference>
<dbReference type="Pfam" id="PF01653">
    <property type="entry name" value="DNA_ligase_aden"/>
    <property type="match status" value="1"/>
</dbReference>
<dbReference type="Pfam" id="PF03120">
    <property type="entry name" value="DNA_ligase_OB"/>
    <property type="match status" value="1"/>
</dbReference>
<dbReference type="Pfam" id="PF03119">
    <property type="entry name" value="DNA_ligase_ZBD"/>
    <property type="match status" value="1"/>
</dbReference>
<dbReference type="Pfam" id="PF12826">
    <property type="entry name" value="HHH_2"/>
    <property type="match status" value="1"/>
</dbReference>
<dbReference type="Pfam" id="PF22745">
    <property type="entry name" value="Nlig-Ia"/>
    <property type="match status" value="1"/>
</dbReference>
<dbReference type="PIRSF" id="PIRSF001604">
    <property type="entry name" value="LigA"/>
    <property type="match status" value="1"/>
</dbReference>
<dbReference type="SMART" id="SM00292">
    <property type="entry name" value="BRCT"/>
    <property type="match status" value="1"/>
</dbReference>
<dbReference type="SMART" id="SM00532">
    <property type="entry name" value="LIGANc"/>
    <property type="match status" value="1"/>
</dbReference>
<dbReference type="SUPFAM" id="SSF52113">
    <property type="entry name" value="BRCT domain"/>
    <property type="match status" value="1"/>
</dbReference>
<dbReference type="SUPFAM" id="SSF56091">
    <property type="entry name" value="DNA ligase/mRNA capping enzyme, catalytic domain"/>
    <property type="match status" value="1"/>
</dbReference>
<dbReference type="SUPFAM" id="SSF50249">
    <property type="entry name" value="Nucleic acid-binding proteins"/>
    <property type="match status" value="1"/>
</dbReference>
<dbReference type="SUPFAM" id="SSF47781">
    <property type="entry name" value="RuvA domain 2-like"/>
    <property type="match status" value="2"/>
</dbReference>
<dbReference type="PROSITE" id="PS50172">
    <property type="entry name" value="BRCT"/>
    <property type="match status" value="1"/>
</dbReference>
<dbReference type="PROSITE" id="PS01055">
    <property type="entry name" value="DNA_LIGASE_N1"/>
    <property type="match status" value="1"/>
</dbReference>
<accession>Q3BV14</accession>
<protein>
    <recommendedName>
        <fullName evidence="1">DNA ligase</fullName>
        <ecNumber evidence="1">6.5.1.2</ecNumber>
    </recommendedName>
    <alternativeName>
        <fullName evidence="1">Polydeoxyribonucleotide synthase [NAD(+)]</fullName>
    </alternativeName>
</protein>
<sequence>MTASPDPAQRIDALRRRIEDANYRYHVLDEPQMADADYDKLMRELEALERAHPELASADSPTQRVGHLAASRFAEVRHALPMLSLGNAFSEEEVTEFVRRISERLEVKQPLFSAEPKLDGLAISLRYENGEFVQGATRGDGATGEDVSANLRTVKAIPLRLRGEGWPQVLEVRGEVYMPRAAFEAYNAQMRAQGGKVLANPRNGAAGSLRQLDARITAQRPLSFFAYGVGEVSEGALPQTHSAILAQLRAWGFPVSALVEVVQGSDGLLAYYQRIGAARDGLAFDIDGVVYKLDDLAGQREMGFVSRAPRWAIAHKFPAQEQSTTVEAIEIQIGRTGAATPVARLKPVHVAGVIVTNATLHNADQIARLDVRVGDTVIVRRAGDVIPEVAAVVADQRPPGTQAWQMPTQCPVCGSQIVREEGQAVWRCSGELTCPAQRKEAFRHFVSRRAMDVDGLGEKFIEVLVDSGLVKGVADLYLLSVDQLLQLRLISTAESPHAFLREAREHLASGAYAQLETSVVGIGVDLAGERDVPQTWQADLLRAGLPRFDWNRKKIATKWAENLIEAIETSRDTTLERFLFALGIEHVGESTAKALSAWFGDLELIRHLPWPLFKRVPDIGGEVARSLGHFFDQAGNQQAIDDLLQRGVRIGDTHPPSPKLREALSFASVLEDMDIPKVTPVRAQQLAASVDSFAALRTAGADALQQAGVPAPVVAALLQWLDRPENTALANAAQQAMETVLARLPQADALQTGPLDGQTVVITGTLAALTRDAAKQRLEALGAKVAGSVSKKTAFLVAGEEAGSKLDKAQSLGVEIWGEARLLAFLGDHGQQP</sequence>
<name>DNLJ_XANE5</name>
<reference key="1">
    <citation type="journal article" date="2005" name="J. Bacteriol.">
        <title>Insights into genome plasticity and pathogenicity of the plant pathogenic Bacterium Xanthomonas campestris pv. vesicatoria revealed by the complete genome sequence.</title>
        <authorList>
            <person name="Thieme F."/>
            <person name="Koebnik R."/>
            <person name="Bekel T."/>
            <person name="Berger C."/>
            <person name="Boch J."/>
            <person name="Buettner D."/>
            <person name="Caldana C."/>
            <person name="Gaigalat L."/>
            <person name="Goesmann A."/>
            <person name="Kay S."/>
            <person name="Kirchner O."/>
            <person name="Lanz C."/>
            <person name="Linke B."/>
            <person name="McHardy A.C."/>
            <person name="Meyer F."/>
            <person name="Mittenhuber G."/>
            <person name="Nies D.H."/>
            <person name="Niesbach-Kloesgen U."/>
            <person name="Patschkowski T."/>
            <person name="Rueckert C."/>
            <person name="Rupp O."/>
            <person name="Schneiker S."/>
            <person name="Schuster S.C."/>
            <person name="Vorhoelter F.J."/>
            <person name="Weber E."/>
            <person name="Puehler A."/>
            <person name="Bonas U."/>
            <person name="Bartels D."/>
            <person name="Kaiser O."/>
        </authorList>
    </citation>
    <scope>NUCLEOTIDE SEQUENCE [LARGE SCALE GENOMIC DNA]</scope>
    <source>
        <strain>85-10</strain>
    </source>
</reference>
<evidence type="ECO:0000255" key="1">
    <source>
        <dbReference type="HAMAP-Rule" id="MF_01588"/>
    </source>
</evidence>
<organism>
    <name type="scientific">Xanthomonas euvesicatoria pv. vesicatoria (strain 85-10)</name>
    <name type="common">Xanthomonas campestris pv. vesicatoria</name>
    <dbReference type="NCBI Taxonomy" id="316273"/>
    <lineage>
        <taxon>Bacteria</taxon>
        <taxon>Pseudomonadati</taxon>
        <taxon>Pseudomonadota</taxon>
        <taxon>Gammaproteobacteria</taxon>
        <taxon>Lysobacterales</taxon>
        <taxon>Lysobacteraceae</taxon>
        <taxon>Xanthomonas</taxon>
    </lineage>
</organism>
<gene>
    <name evidence="1" type="primary">ligA</name>
    <name type="ordered locus">XCV1668</name>
</gene>
<feature type="chain" id="PRO_0000313517" description="DNA ligase">
    <location>
        <begin position="1"/>
        <end position="833"/>
    </location>
</feature>
<feature type="domain" description="BRCT" evidence="1">
    <location>
        <begin position="750"/>
        <end position="833"/>
    </location>
</feature>
<feature type="active site" description="N6-AMP-lysine intermediate" evidence="1">
    <location>
        <position position="117"/>
    </location>
</feature>
<feature type="binding site" evidence="1">
    <location>
        <begin position="35"/>
        <end position="39"/>
    </location>
    <ligand>
        <name>NAD(+)</name>
        <dbReference type="ChEBI" id="CHEBI:57540"/>
    </ligand>
</feature>
<feature type="binding site" evidence="1">
    <location>
        <begin position="84"/>
        <end position="85"/>
    </location>
    <ligand>
        <name>NAD(+)</name>
        <dbReference type="ChEBI" id="CHEBI:57540"/>
    </ligand>
</feature>
<feature type="binding site" evidence="1">
    <location>
        <position position="115"/>
    </location>
    <ligand>
        <name>NAD(+)</name>
        <dbReference type="ChEBI" id="CHEBI:57540"/>
    </ligand>
</feature>
<feature type="binding site" evidence="1">
    <location>
        <position position="138"/>
    </location>
    <ligand>
        <name>NAD(+)</name>
        <dbReference type="ChEBI" id="CHEBI:57540"/>
    </ligand>
</feature>
<feature type="binding site" evidence="1">
    <location>
        <position position="175"/>
    </location>
    <ligand>
        <name>NAD(+)</name>
        <dbReference type="ChEBI" id="CHEBI:57540"/>
    </ligand>
</feature>
<feature type="binding site" evidence="1">
    <location>
        <position position="292"/>
    </location>
    <ligand>
        <name>NAD(+)</name>
        <dbReference type="ChEBI" id="CHEBI:57540"/>
    </ligand>
</feature>
<feature type="binding site" evidence="1">
    <location>
        <position position="316"/>
    </location>
    <ligand>
        <name>NAD(+)</name>
        <dbReference type="ChEBI" id="CHEBI:57540"/>
    </ligand>
</feature>
<feature type="binding site" evidence="1">
    <location>
        <position position="410"/>
    </location>
    <ligand>
        <name>Zn(2+)</name>
        <dbReference type="ChEBI" id="CHEBI:29105"/>
    </ligand>
</feature>
<feature type="binding site" evidence="1">
    <location>
        <position position="413"/>
    </location>
    <ligand>
        <name>Zn(2+)</name>
        <dbReference type="ChEBI" id="CHEBI:29105"/>
    </ligand>
</feature>
<feature type="binding site" evidence="1">
    <location>
        <position position="428"/>
    </location>
    <ligand>
        <name>Zn(2+)</name>
        <dbReference type="ChEBI" id="CHEBI:29105"/>
    </ligand>
</feature>
<feature type="binding site" evidence="1">
    <location>
        <position position="434"/>
    </location>
    <ligand>
        <name>Zn(2+)</name>
        <dbReference type="ChEBI" id="CHEBI:29105"/>
    </ligand>
</feature>
<proteinExistence type="inferred from homology"/>